<reference key="1">
    <citation type="journal article" date="2008" name="J. Bacteriol.">
        <title>Comparative genome sequence analysis of multidrug-resistant Acinetobacter baumannii.</title>
        <authorList>
            <person name="Adams M.D."/>
            <person name="Goglin K."/>
            <person name="Molyneaux N."/>
            <person name="Hujer K.M."/>
            <person name="Lavender H."/>
            <person name="Jamison J.J."/>
            <person name="MacDonald I.J."/>
            <person name="Martin K.M."/>
            <person name="Russo T."/>
            <person name="Campagnari A.A."/>
            <person name="Hujer A.M."/>
            <person name="Bonomo R.A."/>
            <person name="Gill S.R."/>
        </authorList>
    </citation>
    <scope>NUCLEOTIDE SEQUENCE [LARGE SCALE GENOMIC DNA]</scope>
    <source>
        <strain>AB307-0294</strain>
    </source>
</reference>
<accession>B7H096</accession>
<name>Y3060_ACIB3</name>
<comment type="cofactor">
    <cofactor evidence="1">
        <name>Fe(2+)</name>
        <dbReference type="ChEBI" id="CHEBI:29033"/>
    </cofactor>
    <text evidence="1">Binds 1 Fe(2+) ion per subunit.</text>
</comment>
<comment type="cofactor">
    <cofactor evidence="1">
        <name>L-ascorbate</name>
        <dbReference type="ChEBI" id="CHEBI:38290"/>
    </cofactor>
</comment>
<keyword id="KW-0223">Dioxygenase</keyword>
<keyword id="KW-0408">Iron</keyword>
<keyword id="KW-0479">Metal-binding</keyword>
<keyword id="KW-0560">Oxidoreductase</keyword>
<keyword id="KW-0847">Vitamin C</keyword>
<sequence>MIHHIPNVLSKEQVQYFRNEMDKIEWVNGKVTAGTLSATVKRNQQLPEDHPLTHHLSNIILEALGTHPLFLSAAIPLDIIPPLFNRYENQESFGFHVDNSIRRIRGTNERLRTDLSCTLFLSEPEEYEGGDLVVEDTYGYHEVKLPAGDMILYPSTSLHEVTAITSGCRIASFFWVQSMVRDDAERHMLFNLDQTVQNLRMQLGDNHSEVIKLTNLYHNLMRKWAEL</sequence>
<proteinExistence type="inferred from homology"/>
<protein>
    <recommendedName>
        <fullName evidence="1">PKHD-type hydroxylase ABBFA_003060</fullName>
        <ecNumber evidence="1">1.14.11.-</ecNumber>
    </recommendedName>
</protein>
<evidence type="ECO:0000255" key="1">
    <source>
        <dbReference type="HAMAP-Rule" id="MF_00657"/>
    </source>
</evidence>
<feature type="chain" id="PRO_1000131201" description="PKHD-type hydroxylase ABBFA_003060">
    <location>
        <begin position="1"/>
        <end position="227"/>
    </location>
</feature>
<feature type="domain" description="Fe2OG dioxygenase" evidence="1">
    <location>
        <begin position="78"/>
        <end position="178"/>
    </location>
</feature>
<feature type="binding site" evidence="1">
    <location>
        <position position="96"/>
    </location>
    <ligand>
        <name>Fe cation</name>
        <dbReference type="ChEBI" id="CHEBI:24875"/>
    </ligand>
</feature>
<feature type="binding site" evidence="1">
    <location>
        <position position="98"/>
    </location>
    <ligand>
        <name>Fe cation</name>
        <dbReference type="ChEBI" id="CHEBI:24875"/>
    </ligand>
</feature>
<feature type="binding site" evidence="1">
    <location>
        <position position="159"/>
    </location>
    <ligand>
        <name>Fe cation</name>
        <dbReference type="ChEBI" id="CHEBI:24875"/>
    </ligand>
</feature>
<feature type="binding site" evidence="1">
    <location>
        <position position="169"/>
    </location>
    <ligand>
        <name>2-oxoglutarate</name>
        <dbReference type="ChEBI" id="CHEBI:16810"/>
    </ligand>
</feature>
<organism>
    <name type="scientific">Acinetobacter baumannii (strain AB307-0294)</name>
    <dbReference type="NCBI Taxonomy" id="557600"/>
    <lineage>
        <taxon>Bacteria</taxon>
        <taxon>Pseudomonadati</taxon>
        <taxon>Pseudomonadota</taxon>
        <taxon>Gammaproteobacteria</taxon>
        <taxon>Moraxellales</taxon>
        <taxon>Moraxellaceae</taxon>
        <taxon>Acinetobacter</taxon>
        <taxon>Acinetobacter calcoaceticus/baumannii complex</taxon>
    </lineage>
</organism>
<gene>
    <name type="ordered locus">ABBFA_003060</name>
</gene>
<dbReference type="EC" id="1.14.11.-" evidence="1"/>
<dbReference type="EMBL" id="CP001172">
    <property type="protein sequence ID" value="ACJ56023.1"/>
    <property type="molecule type" value="Genomic_DNA"/>
</dbReference>
<dbReference type="RefSeq" id="WP_001984475.1">
    <property type="nucleotide sequence ID" value="NZ_CP001172.1"/>
</dbReference>
<dbReference type="SMR" id="B7H096"/>
<dbReference type="HOGENOM" id="CLU_106663_0_0_6"/>
<dbReference type="Proteomes" id="UP000006924">
    <property type="component" value="Chromosome"/>
</dbReference>
<dbReference type="GO" id="GO:0016706">
    <property type="term" value="F:2-oxoglutarate-dependent dioxygenase activity"/>
    <property type="evidence" value="ECO:0007669"/>
    <property type="project" value="UniProtKB-UniRule"/>
</dbReference>
<dbReference type="GO" id="GO:0005506">
    <property type="term" value="F:iron ion binding"/>
    <property type="evidence" value="ECO:0007669"/>
    <property type="project" value="UniProtKB-UniRule"/>
</dbReference>
<dbReference type="GO" id="GO:0031418">
    <property type="term" value="F:L-ascorbic acid binding"/>
    <property type="evidence" value="ECO:0007669"/>
    <property type="project" value="UniProtKB-KW"/>
</dbReference>
<dbReference type="GO" id="GO:0006974">
    <property type="term" value="P:DNA damage response"/>
    <property type="evidence" value="ECO:0007669"/>
    <property type="project" value="TreeGrafter"/>
</dbReference>
<dbReference type="GO" id="GO:0006879">
    <property type="term" value="P:intracellular iron ion homeostasis"/>
    <property type="evidence" value="ECO:0007669"/>
    <property type="project" value="TreeGrafter"/>
</dbReference>
<dbReference type="Gene3D" id="2.60.120.620">
    <property type="entry name" value="q2cbj1_9rhob like domain"/>
    <property type="match status" value="1"/>
</dbReference>
<dbReference type="Gene3D" id="4.10.860.20">
    <property type="entry name" value="Rabenosyn, Rab binding domain"/>
    <property type="match status" value="1"/>
</dbReference>
<dbReference type="HAMAP" id="MF_00657">
    <property type="entry name" value="Hydroxyl_YbiX"/>
    <property type="match status" value="1"/>
</dbReference>
<dbReference type="InterPro" id="IPR005123">
    <property type="entry name" value="Oxoglu/Fe-dep_dioxygenase_dom"/>
</dbReference>
<dbReference type="InterPro" id="IPR041097">
    <property type="entry name" value="PKHD_C"/>
</dbReference>
<dbReference type="InterPro" id="IPR023550">
    <property type="entry name" value="PKHD_hydroxylase"/>
</dbReference>
<dbReference type="InterPro" id="IPR006620">
    <property type="entry name" value="Pro_4_hyd_alph"/>
</dbReference>
<dbReference type="InterPro" id="IPR044862">
    <property type="entry name" value="Pro_4_hyd_alph_FE2OG_OXY"/>
</dbReference>
<dbReference type="NCBIfam" id="NF003973">
    <property type="entry name" value="PRK05467.1-2"/>
    <property type="match status" value="1"/>
</dbReference>
<dbReference type="NCBIfam" id="NF003974">
    <property type="entry name" value="PRK05467.1-3"/>
    <property type="match status" value="1"/>
</dbReference>
<dbReference type="NCBIfam" id="NF003975">
    <property type="entry name" value="PRK05467.1-4"/>
    <property type="match status" value="1"/>
</dbReference>
<dbReference type="PANTHER" id="PTHR41536">
    <property type="entry name" value="PKHD-TYPE HYDROXYLASE YBIX"/>
    <property type="match status" value="1"/>
</dbReference>
<dbReference type="PANTHER" id="PTHR41536:SF1">
    <property type="entry name" value="PKHD-TYPE HYDROXYLASE YBIX"/>
    <property type="match status" value="1"/>
</dbReference>
<dbReference type="Pfam" id="PF13640">
    <property type="entry name" value="2OG-FeII_Oxy_3"/>
    <property type="match status" value="1"/>
</dbReference>
<dbReference type="Pfam" id="PF18331">
    <property type="entry name" value="PKHD_C"/>
    <property type="match status" value="1"/>
</dbReference>
<dbReference type="SMART" id="SM00702">
    <property type="entry name" value="P4Hc"/>
    <property type="match status" value="1"/>
</dbReference>
<dbReference type="SUPFAM" id="SSF51197">
    <property type="entry name" value="Clavaminate synthase-like"/>
    <property type="match status" value="1"/>
</dbReference>
<dbReference type="PROSITE" id="PS51471">
    <property type="entry name" value="FE2OG_OXY"/>
    <property type="match status" value="1"/>
</dbReference>